<protein>
    <recommendedName>
        <fullName>6-phosphogluconolactonase</fullName>
        <shortName>6PGL</shortName>
        <ecNumber>3.1.1.31</ecNumber>
    </recommendedName>
</protein>
<accession>O51240</accession>
<reference key="1">
    <citation type="journal article" date="1997" name="Nature">
        <title>Genomic sequence of a Lyme disease spirochaete, Borrelia burgdorferi.</title>
        <authorList>
            <person name="Fraser C.M."/>
            <person name="Casjens S."/>
            <person name="Huang W.M."/>
            <person name="Sutton G.G."/>
            <person name="Clayton R.A."/>
            <person name="Lathigra R."/>
            <person name="White O."/>
            <person name="Ketchum K.A."/>
            <person name="Dodson R.J."/>
            <person name="Hickey E.K."/>
            <person name="Gwinn M.L."/>
            <person name="Dougherty B.A."/>
            <person name="Tomb J.-F."/>
            <person name="Fleischmann R.D."/>
            <person name="Richardson D.L."/>
            <person name="Peterson J.D."/>
            <person name="Kerlavage A.R."/>
            <person name="Quackenbush J."/>
            <person name="Salzberg S.L."/>
            <person name="Hanson M."/>
            <person name="van Vugt R."/>
            <person name="Palmer N."/>
            <person name="Adams M.D."/>
            <person name="Gocayne J.D."/>
            <person name="Weidman J.F."/>
            <person name="Utterback T.R."/>
            <person name="Watthey L."/>
            <person name="McDonald L.A."/>
            <person name="Artiach P."/>
            <person name="Bowman C."/>
            <person name="Garland S.A."/>
            <person name="Fujii C."/>
            <person name="Cotton M.D."/>
            <person name="Horst K."/>
            <person name="Roberts K.M."/>
            <person name="Hatch B."/>
            <person name="Smith H.O."/>
            <person name="Venter J.C."/>
        </authorList>
    </citation>
    <scope>NUCLEOTIDE SEQUENCE [LARGE SCALE GENOMIC DNA]</scope>
    <source>
        <strain>ATCC 35210 / DSM 4680 / CIP 102532 / B31</strain>
    </source>
</reference>
<gene>
    <name type="primary">pgl</name>
    <name type="synonym">devB</name>
    <name type="ordered locus">BB_0222</name>
</gene>
<keyword id="KW-0378">Hydrolase</keyword>
<keyword id="KW-1185">Reference proteome</keyword>
<evidence type="ECO:0000305" key="1"/>
<dbReference type="EC" id="3.1.1.31"/>
<dbReference type="EMBL" id="AE000783">
    <property type="protein sequence ID" value="AAC66602.1"/>
    <property type="molecule type" value="Genomic_DNA"/>
</dbReference>
<dbReference type="PIR" id="F70127">
    <property type="entry name" value="F70127"/>
</dbReference>
<dbReference type="RefSeq" id="NP_212356.1">
    <property type="nucleotide sequence ID" value="NC_001318.1"/>
</dbReference>
<dbReference type="RefSeq" id="WP_002661712.1">
    <property type="nucleotide sequence ID" value="NC_001318.1"/>
</dbReference>
<dbReference type="SMR" id="O51240"/>
<dbReference type="STRING" id="224326.BB_0222"/>
<dbReference type="PaxDb" id="224326-BB_0222"/>
<dbReference type="EnsemblBacteria" id="AAC66602">
    <property type="protein sequence ID" value="AAC66602"/>
    <property type="gene ID" value="BB_0222"/>
</dbReference>
<dbReference type="KEGG" id="bbu:BB_0222"/>
<dbReference type="PATRIC" id="fig|224326.49.peg.620"/>
<dbReference type="HOGENOM" id="CLU_053947_3_0_12"/>
<dbReference type="OrthoDB" id="9810967at2"/>
<dbReference type="UniPathway" id="UPA00115">
    <property type="reaction ID" value="UER00409"/>
</dbReference>
<dbReference type="Proteomes" id="UP000001807">
    <property type="component" value="Chromosome"/>
</dbReference>
<dbReference type="GO" id="GO:0017057">
    <property type="term" value="F:6-phosphogluconolactonase activity"/>
    <property type="evidence" value="ECO:0007669"/>
    <property type="project" value="UniProtKB-EC"/>
</dbReference>
<dbReference type="GO" id="GO:0005975">
    <property type="term" value="P:carbohydrate metabolic process"/>
    <property type="evidence" value="ECO:0007669"/>
    <property type="project" value="InterPro"/>
</dbReference>
<dbReference type="GO" id="GO:0006098">
    <property type="term" value="P:pentose-phosphate shunt"/>
    <property type="evidence" value="ECO:0007669"/>
    <property type="project" value="UniProtKB-UniPathway"/>
</dbReference>
<dbReference type="CDD" id="cd01400">
    <property type="entry name" value="6PGL"/>
    <property type="match status" value="1"/>
</dbReference>
<dbReference type="Gene3D" id="3.40.50.1360">
    <property type="match status" value="1"/>
</dbReference>
<dbReference type="InterPro" id="IPR005900">
    <property type="entry name" value="6-phosphogluconolactonase_DevB"/>
</dbReference>
<dbReference type="InterPro" id="IPR006148">
    <property type="entry name" value="Glc/Gal-6P_isomerase"/>
</dbReference>
<dbReference type="InterPro" id="IPR037171">
    <property type="entry name" value="NagB/RpiA_transferase-like"/>
</dbReference>
<dbReference type="InterPro" id="IPR039104">
    <property type="entry name" value="PGLS"/>
</dbReference>
<dbReference type="PANTHER" id="PTHR11054">
    <property type="entry name" value="6-PHOSPHOGLUCONOLACTONASE"/>
    <property type="match status" value="1"/>
</dbReference>
<dbReference type="PANTHER" id="PTHR11054:SF0">
    <property type="entry name" value="6-PHOSPHOGLUCONOLACTONASE"/>
    <property type="match status" value="1"/>
</dbReference>
<dbReference type="Pfam" id="PF01182">
    <property type="entry name" value="Glucosamine_iso"/>
    <property type="match status" value="1"/>
</dbReference>
<dbReference type="SUPFAM" id="SSF100950">
    <property type="entry name" value="NagB/RpiA/CoA transferase-like"/>
    <property type="match status" value="1"/>
</dbReference>
<feature type="chain" id="PRO_0000090089" description="6-phosphogluconolactonase">
    <location>
        <begin position="1"/>
        <end position="235"/>
    </location>
</feature>
<proteinExistence type="inferred from homology"/>
<name>6PGL_BORBU</name>
<comment type="function">
    <text>Hydrolysis of 6-phosphogluconolactone to 6-phosphogluconate.</text>
</comment>
<comment type="catalytic activity">
    <reaction>
        <text>6-phospho-D-glucono-1,5-lactone + H2O = 6-phospho-D-gluconate + H(+)</text>
        <dbReference type="Rhea" id="RHEA:12556"/>
        <dbReference type="ChEBI" id="CHEBI:15377"/>
        <dbReference type="ChEBI" id="CHEBI:15378"/>
        <dbReference type="ChEBI" id="CHEBI:57955"/>
        <dbReference type="ChEBI" id="CHEBI:58759"/>
        <dbReference type="EC" id="3.1.1.31"/>
    </reaction>
</comment>
<comment type="pathway">
    <text>Carbohydrate degradation; pentose phosphate pathway; D-ribulose 5-phosphate from D-glucose 6-phosphate (oxidative stage): step 2/3.</text>
</comment>
<comment type="similarity">
    <text evidence="1">Belongs to the glucosamine/galactosamine-6-phosphate isomerase family. 6-phosphogluconolactonase subfamily.</text>
</comment>
<sequence length="235" mass="27198">MEFLYSDEENYLKDRFFDFFNMNVDKDKYTSIGICGGRSIVNFLSVFLKQNFSFRRSHFFLVDERCVPLNDENSNYNLLNKNFFSKMVDKNLISISKFHAFVYSEIDEATAIHDYNIEFNSRFNIFDFIIVSVGEDGHIASLFPSRKLLFSDVEGYQYEYNSPKFPSKRISLTPKSLFGSKAVVLLFMGVDKKCALENFLASNSSINECPARLLKEHPNLLVLTNIKRDESYAGS</sequence>
<organism>
    <name type="scientific">Borreliella burgdorferi (strain ATCC 35210 / DSM 4680 / CIP 102532 / B31)</name>
    <name type="common">Borrelia burgdorferi</name>
    <dbReference type="NCBI Taxonomy" id="224326"/>
    <lineage>
        <taxon>Bacteria</taxon>
        <taxon>Pseudomonadati</taxon>
        <taxon>Spirochaetota</taxon>
        <taxon>Spirochaetia</taxon>
        <taxon>Spirochaetales</taxon>
        <taxon>Borreliaceae</taxon>
        <taxon>Borreliella</taxon>
    </lineage>
</organism>